<name>PRPSC_DICDI</name>
<evidence type="ECO:0000250" key="1"/>
<evidence type="ECO:0000255" key="2"/>
<evidence type="ECO:0000305" key="3"/>
<keyword id="KW-0067">ATP-binding</keyword>
<keyword id="KW-0963">Cytoplasm</keyword>
<keyword id="KW-0418">Kinase</keyword>
<keyword id="KW-0460">Magnesium</keyword>
<keyword id="KW-0479">Metal-binding</keyword>
<keyword id="KW-0545">Nucleotide biosynthesis</keyword>
<keyword id="KW-0547">Nucleotide-binding</keyword>
<keyword id="KW-1185">Reference proteome</keyword>
<keyword id="KW-0808">Transferase</keyword>
<gene>
    <name type="primary">prsC</name>
    <name type="ORF">DDB_G0283627</name>
</gene>
<protein>
    <recommendedName>
        <fullName>Ribose-phosphate pyrophosphokinase C</fullName>
        <ecNumber>2.7.6.1</ecNumber>
    </recommendedName>
    <alternativeName>
        <fullName>Phosphoribosyl pyrophosphate synthase C</fullName>
    </alternativeName>
</protein>
<comment type="catalytic activity">
    <reaction>
        <text>D-ribose 5-phosphate + ATP = 5-phospho-alpha-D-ribose 1-diphosphate + AMP + H(+)</text>
        <dbReference type="Rhea" id="RHEA:15609"/>
        <dbReference type="ChEBI" id="CHEBI:15378"/>
        <dbReference type="ChEBI" id="CHEBI:30616"/>
        <dbReference type="ChEBI" id="CHEBI:58017"/>
        <dbReference type="ChEBI" id="CHEBI:78346"/>
        <dbReference type="ChEBI" id="CHEBI:456215"/>
        <dbReference type="EC" id="2.7.6.1"/>
    </reaction>
</comment>
<comment type="cofactor">
    <cofactor evidence="1">
        <name>Mg(2+)</name>
        <dbReference type="ChEBI" id="CHEBI:18420"/>
    </cofactor>
</comment>
<comment type="pathway">
    <text>Metabolic intermediate biosynthesis; 5-phospho-alpha-D-ribose 1-diphosphate biosynthesis; 5-phospho-alpha-D-ribose 1-diphosphate from D-ribose 5-phosphate (route I): step 1/1.</text>
</comment>
<comment type="subcellular location">
    <subcellularLocation>
        <location evidence="3">Cytoplasm</location>
    </subcellularLocation>
</comment>
<comment type="similarity">
    <text evidence="3">Belongs to the ribose-phosphate pyrophosphokinase family.</text>
</comment>
<accession>Q54QU9</accession>
<sequence length="321" mass="34976">MKTMESVRLISGSAHPQFAELLSKGMNIELSKCESKHFLNGETSVILGESVRSASVYIIQPTCSPNVNDNIMELLVLVDAVRRASSKHITAVIPFFGYGKQNKKEKSREPITGKLIANLIETSGVDRVISMDLEASQIQGFFNIPVDNLYAEPLIVKYIEKHYKHLGEKVVISPAVDGVKRAKLVSDKLNCDLAILDRQTKGDKEDMILVGDVSGKVAIIIGSIADTCETLALSAKILKSKGATNVFALVSHGELSGNAIETLNNSELEELVITNSIPQTEKSKQCPKLKIINVTPMFCEALKRIIHGESITAASSKFVIL</sequence>
<dbReference type="EC" id="2.7.6.1"/>
<dbReference type="EMBL" id="AAFI02000056">
    <property type="protein sequence ID" value="EAL65580.1"/>
    <property type="molecule type" value="Genomic_DNA"/>
</dbReference>
<dbReference type="RefSeq" id="XP_638924.1">
    <property type="nucleotide sequence ID" value="XM_633832.1"/>
</dbReference>
<dbReference type="SMR" id="Q54QU9"/>
<dbReference type="FunCoup" id="Q54QU9">
    <property type="interactions" value="132"/>
</dbReference>
<dbReference type="STRING" id="44689.Q54QU9"/>
<dbReference type="PaxDb" id="44689-DDB0237884"/>
<dbReference type="EnsemblProtists" id="EAL65580">
    <property type="protein sequence ID" value="EAL65580"/>
    <property type="gene ID" value="DDB_G0283627"/>
</dbReference>
<dbReference type="GeneID" id="8624163"/>
<dbReference type="KEGG" id="ddi:DDB_G0283627"/>
<dbReference type="dictyBase" id="DDB_G0283627">
    <property type="gene designation" value="prsC"/>
</dbReference>
<dbReference type="VEuPathDB" id="AmoebaDB:DDB_G0283627"/>
<dbReference type="eggNOG" id="KOG1448">
    <property type="taxonomic scope" value="Eukaryota"/>
</dbReference>
<dbReference type="HOGENOM" id="CLU_033546_4_0_1"/>
<dbReference type="InParanoid" id="Q54QU9"/>
<dbReference type="OMA" id="GIIACPG"/>
<dbReference type="PhylomeDB" id="Q54QU9"/>
<dbReference type="Reactome" id="R-DDI-73843">
    <property type="pathway name" value="5-Phosphoribose 1-diphosphate biosynthesis"/>
</dbReference>
<dbReference type="UniPathway" id="UPA00087">
    <property type="reaction ID" value="UER00172"/>
</dbReference>
<dbReference type="PRO" id="PR:Q54QU9"/>
<dbReference type="Proteomes" id="UP000002195">
    <property type="component" value="Chromosome 4"/>
</dbReference>
<dbReference type="GO" id="GO:0005737">
    <property type="term" value="C:cytoplasm"/>
    <property type="evidence" value="ECO:0000318"/>
    <property type="project" value="GO_Central"/>
</dbReference>
<dbReference type="GO" id="GO:0002189">
    <property type="term" value="C:ribose phosphate diphosphokinase complex"/>
    <property type="evidence" value="ECO:0000318"/>
    <property type="project" value="GO_Central"/>
</dbReference>
<dbReference type="GO" id="GO:0005524">
    <property type="term" value="F:ATP binding"/>
    <property type="evidence" value="ECO:0007669"/>
    <property type="project" value="UniProtKB-KW"/>
</dbReference>
<dbReference type="GO" id="GO:0016301">
    <property type="term" value="F:kinase activity"/>
    <property type="evidence" value="ECO:0007669"/>
    <property type="project" value="UniProtKB-KW"/>
</dbReference>
<dbReference type="GO" id="GO:0000287">
    <property type="term" value="F:magnesium ion binding"/>
    <property type="evidence" value="ECO:0007669"/>
    <property type="project" value="InterPro"/>
</dbReference>
<dbReference type="GO" id="GO:0004749">
    <property type="term" value="F:ribose phosphate diphosphokinase activity"/>
    <property type="evidence" value="ECO:0000250"/>
    <property type="project" value="dictyBase"/>
</dbReference>
<dbReference type="GO" id="GO:0006015">
    <property type="term" value="P:5-phosphoribose 1-diphosphate biosynthetic process"/>
    <property type="evidence" value="ECO:0000250"/>
    <property type="project" value="dictyBase"/>
</dbReference>
<dbReference type="GO" id="GO:0006164">
    <property type="term" value="P:purine nucleotide biosynthetic process"/>
    <property type="evidence" value="ECO:0000318"/>
    <property type="project" value="GO_Central"/>
</dbReference>
<dbReference type="CDD" id="cd06223">
    <property type="entry name" value="PRTases_typeI"/>
    <property type="match status" value="1"/>
</dbReference>
<dbReference type="FunFam" id="3.40.50.2020:FF:000001">
    <property type="entry name" value="Ribose-phosphate pyrophosphokinase"/>
    <property type="match status" value="1"/>
</dbReference>
<dbReference type="Gene3D" id="3.40.50.2020">
    <property type="match status" value="2"/>
</dbReference>
<dbReference type="InterPro" id="IPR029099">
    <property type="entry name" value="Pribosyltran_N"/>
</dbReference>
<dbReference type="InterPro" id="IPR000836">
    <property type="entry name" value="PRibTrfase_dom"/>
</dbReference>
<dbReference type="InterPro" id="IPR029057">
    <property type="entry name" value="PRTase-like"/>
</dbReference>
<dbReference type="InterPro" id="IPR005946">
    <property type="entry name" value="Rib-P_diPkinase"/>
</dbReference>
<dbReference type="NCBIfam" id="NF002320">
    <property type="entry name" value="PRK01259.1"/>
    <property type="match status" value="1"/>
</dbReference>
<dbReference type="NCBIfam" id="TIGR01251">
    <property type="entry name" value="ribP_PPkin"/>
    <property type="match status" value="1"/>
</dbReference>
<dbReference type="PANTHER" id="PTHR10210">
    <property type="entry name" value="RIBOSE-PHOSPHATE DIPHOSPHOKINASE FAMILY MEMBER"/>
    <property type="match status" value="1"/>
</dbReference>
<dbReference type="PANTHER" id="PTHR10210:SF89">
    <property type="entry name" value="RIBOSE-PHOSPHATE PYROPHOSPHOKINASE C"/>
    <property type="match status" value="1"/>
</dbReference>
<dbReference type="Pfam" id="PF14572">
    <property type="entry name" value="Pribosyl_synth"/>
    <property type="match status" value="1"/>
</dbReference>
<dbReference type="Pfam" id="PF13793">
    <property type="entry name" value="Pribosyltran_N"/>
    <property type="match status" value="1"/>
</dbReference>
<dbReference type="SMART" id="SM01400">
    <property type="entry name" value="Pribosyltran_N"/>
    <property type="match status" value="1"/>
</dbReference>
<dbReference type="SUPFAM" id="SSF53271">
    <property type="entry name" value="PRTase-like"/>
    <property type="match status" value="2"/>
</dbReference>
<proteinExistence type="inferred from homology"/>
<feature type="chain" id="PRO_0000328322" description="Ribose-phosphate pyrophosphokinase C">
    <location>
        <begin position="1"/>
        <end position="321"/>
    </location>
</feature>
<feature type="region of interest" description="Binding of phosphoribosylpyrophosphate" evidence="2">
    <location>
        <begin position="214"/>
        <end position="229"/>
    </location>
</feature>
<feature type="binding site" evidence="2">
    <location>
        <position position="132"/>
    </location>
    <ligand>
        <name>Mg(2+)</name>
        <dbReference type="ChEBI" id="CHEBI:18420"/>
    </ligand>
</feature>
<feature type="binding site" evidence="2">
    <location>
        <position position="147"/>
    </location>
    <ligand>
        <name>Mg(2+)</name>
        <dbReference type="ChEBI" id="CHEBI:18420"/>
    </ligand>
</feature>
<reference key="1">
    <citation type="journal article" date="2005" name="Nature">
        <title>The genome of the social amoeba Dictyostelium discoideum.</title>
        <authorList>
            <person name="Eichinger L."/>
            <person name="Pachebat J.A."/>
            <person name="Gloeckner G."/>
            <person name="Rajandream M.A."/>
            <person name="Sucgang R."/>
            <person name="Berriman M."/>
            <person name="Song J."/>
            <person name="Olsen R."/>
            <person name="Szafranski K."/>
            <person name="Xu Q."/>
            <person name="Tunggal B."/>
            <person name="Kummerfeld S."/>
            <person name="Madera M."/>
            <person name="Konfortov B.A."/>
            <person name="Rivero F."/>
            <person name="Bankier A.T."/>
            <person name="Lehmann R."/>
            <person name="Hamlin N."/>
            <person name="Davies R."/>
            <person name="Gaudet P."/>
            <person name="Fey P."/>
            <person name="Pilcher K."/>
            <person name="Chen G."/>
            <person name="Saunders D."/>
            <person name="Sodergren E.J."/>
            <person name="Davis P."/>
            <person name="Kerhornou A."/>
            <person name="Nie X."/>
            <person name="Hall N."/>
            <person name="Anjard C."/>
            <person name="Hemphill L."/>
            <person name="Bason N."/>
            <person name="Farbrother P."/>
            <person name="Desany B."/>
            <person name="Just E."/>
            <person name="Morio T."/>
            <person name="Rost R."/>
            <person name="Churcher C.M."/>
            <person name="Cooper J."/>
            <person name="Haydock S."/>
            <person name="van Driessche N."/>
            <person name="Cronin A."/>
            <person name="Goodhead I."/>
            <person name="Muzny D.M."/>
            <person name="Mourier T."/>
            <person name="Pain A."/>
            <person name="Lu M."/>
            <person name="Harper D."/>
            <person name="Lindsay R."/>
            <person name="Hauser H."/>
            <person name="James K.D."/>
            <person name="Quiles M."/>
            <person name="Madan Babu M."/>
            <person name="Saito T."/>
            <person name="Buchrieser C."/>
            <person name="Wardroper A."/>
            <person name="Felder M."/>
            <person name="Thangavelu M."/>
            <person name="Johnson D."/>
            <person name="Knights A."/>
            <person name="Loulseged H."/>
            <person name="Mungall K.L."/>
            <person name="Oliver K."/>
            <person name="Price C."/>
            <person name="Quail M.A."/>
            <person name="Urushihara H."/>
            <person name="Hernandez J."/>
            <person name="Rabbinowitsch E."/>
            <person name="Steffen D."/>
            <person name="Sanders M."/>
            <person name="Ma J."/>
            <person name="Kohara Y."/>
            <person name="Sharp S."/>
            <person name="Simmonds M.N."/>
            <person name="Spiegler S."/>
            <person name="Tivey A."/>
            <person name="Sugano S."/>
            <person name="White B."/>
            <person name="Walker D."/>
            <person name="Woodward J.R."/>
            <person name="Winckler T."/>
            <person name="Tanaka Y."/>
            <person name="Shaulsky G."/>
            <person name="Schleicher M."/>
            <person name="Weinstock G.M."/>
            <person name="Rosenthal A."/>
            <person name="Cox E.C."/>
            <person name="Chisholm R.L."/>
            <person name="Gibbs R.A."/>
            <person name="Loomis W.F."/>
            <person name="Platzer M."/>
            <person name="Kay R.R."/>
            <person name="Williams J.G."/>
            <person name="Dear P.H."/>
            <person name="Noegel A.A."/>
            <person name="Barrell B.G."/>
            <person name="Kuspa A."/>
        </authorList>
    </citation>
    <scope>NUCLEOTIDE SEQUENCE [LARGE SCALE GENOMIC DNA]</scope>
    <source>
        <strain>AX4</strain>
    </source>
</reference>
<organism>
    <name type="scientific">Dictyostelium discoideum</name>
    <name type="common">Social amoeba</name>
    <dbReference type="NCBI Taxonomy" id="44689"/>
    <lineage>
        <taxon>Eukaryota</taxon>
        <taxon>Amoebozoa</taxon>
        <taxon>Evosea</taxon>
        <taxon>Eumycetozoa</taxon>
        <taxon>Dictyostelia</taxon>
        <taxon>Dictyosteliales</taxon>
        <taxon>Dictyosteliaceae</taxon>
        <taxon>Dictyostelium</taxon>
    </lineage>
</organism>